<dbReference type="EC" id="2.5.1.18"/>
<dbReference type="EMBL" id="AAFI02000011">
    <property type="protein sequence ID" value="EAL70474.1"/>
    <property type="molecule type" value="Genomic_DNA"/>
</dbReference>
<dbReference type="EMBL" id="AAFI02000009">
    <property type="protein sequence ID" value="EAL70953.1"/>
    <property type="molecule type" value="Genomic_DNA"/>
</dbReference>
<dbReference type="RefSeq" id="XP_644399.1">
    <property type="nucleotide sequence ID" value="XM_639307.1"/>
</dbReference>
<dbReference type="RefSeq" id="XP_645014.1">
    <property type="nucleotide sequence ID" value="XM_639922.1"/>
</dbReference>
<dbReference type="SMR" id="Q556G3"/>
<dbReference type="FunCoup" id="Q556G3">
    <property type="interactions" value="69"/>
</dbReference>
<dbReference type="STRING" id="44689.Q556G3"/>
<dbReference type="PaxDb" id="44689-DDB0231432"/>
<dbReference type="EnsemblProtists" id="EAL70474">
    <property type="protein sequence ID" value="EAL70474"/>
    <property type="gene ID" value="DDB_G0274081"/>
</dbReference>
<dbReference type="EnsemblProtists" id="EAL70953">
    <property type="protein sequence ID" value="EAL70953"/>
    <property type="gene ID" value="DDB_G0272632"/>
</dbReference>
<dbReference type="GeneID" id="8618691"/>
<dbReference type="GeneID" id="8619285"/>
<dbReference type="KEGG" id="ddi:DDB_G0272632"/>
<dbReference type="KEGG" id="ddi:DDB_G0274081"/>
<dbReference type="dictyBase" id="DDB_G0272632">
    <property type="gene designation" value="gstA2-1"/>
</dbReference>
<dbReference type="dictyBase" id="DDB_G0274081">
    <property type="gene designation" value="gstA2-2"/>
</dbReference>
<dbReference type="VEuPathDB" id="AmoebaDB:DDB_G0274081"/>
<dbReference type="eggNOG" id="KOG1695">
    <property type="taxonomic scope" value="Eukaryota"/>
</dbReference>
<dbReference type="HOGENOM" id="CLU_039475_1_0_1"/>
<dbReference type="InParanoid" id="Q556G3"/>
<dbReference type="OMA" id="KKSCVFG"/>
<dbReference type="PhylomeDB" id="Q556G3"/>
<dbReference type="Reactome" id="R-DDI-156590">
    <property type="pathway name" value="Glutathione conjugation"/>
</dbReference>
<dbReference type="Reactome" id="R-DDI-189483">
    <property type="pathway name" value="Heme degradation"/>
</dbReference>
<dbReference type="Reactome" id="R-DDI-2162123">
    <property type="pathway name" value="Synthesis of Prostaglandins (PG) and Thromboxanes (TX)"/>
</dbReference>
<dbReference type="Reactome" id="R-DDI-3299685">
    <property type="pathway name" value="Detoxification of Reactive Oxygen Species"/>
</dbReference>
<dbReference type="Reactome" id="R-DDI-6798695">
    <property type="pathway name" value="Neutrophil degranulation"/>
</dbReference>
<dbReference type="Reactome" id="R-DDI-9748787">
    <property type="pathway name" value="Azathioprine ADME"/>
</dbReference>
<dbReference type="Reactome" id="R-DDI-9753281">
    <property type="pathway name" value="Paracetamol ADME"/>
</dbReference>
<dbReference type="PRO" id="PR:Q556G3"/>
<dbReference type="Proteomes" id="UP000002195">
    <property type="component" value="Chromosome 2"/>
</dbReference>
<dbReference type="GO" id="GO:0045335">
    <property type="term" value="C:phagocytic vesicle"/>
    <property type="evidence" value="ECO:0007005"/>
    <property type="project" value="dictyBase"/>
</dbReference>
<dbReference type="GO" id="GO:0004364">
    <property type="term" value="F:glutathione transferase activity"/>
    <property type="evidence" value="ECO:0000314"/>
    <property type="project" value="dictyBase"/>
</dbReference>
<dbReference type="GO" id="GO:0006749">
    <property type="term" value="P:glutathione metabolic process"/>
    <property type="evidence" value="ECO:0000318"/>
    <property type="project" value="GO_Central"/>
</dbReference>
<dbReference type="GO" id="GO:1904643">
    <property type="term" value="P:response to curcumin"/>
    <property type="evidence" value="ECO:0000314"/>
    <property type="project" value="dictyBase"/>
</dbReference>
<dbReference type="GO" id="GO:0031153">
    <property type="term" value="P:slug development involved in sorocarp development"/>
    <property type="evidence" value="ECO:0000315"/>
    <property type="project" value="dictyBase"/>
</dbReference>
<dbReference type="CDD" id="cd03192">
    <property type="entry name" value="GST_C_Sigma_like"/>
    <property type="match status" value="1"/>
</dbReference>
<dbReference type="CDD" id="cd03039">
    <property type="entry name" value="GST_N_Sigma_like"/>
    <property type="match status" value="1"/>
</dbReference>
<dbReference type="FunFam" id="1.20.1050.130:FF:000014">
    <property type="entry name" value="Putative glutathione S-transferase alpha-5"/>
    <property type="match status" value="1"/>
</dbReference>
<dbReference type="Gene3D" id="1.20.1050.130">
    <property type="match status" value="1"/>
</dbReference>
<dbReference type="InterPro" id="IPR010987">
    <property type="entry name" value="Glutathione-S-Trfase_C-like"/>
</dbReference>
<dbReference type="InterPro" id="IPR036282">
    <property type="entry name" value="Glutathione-S-Trfase_C_sf"/>
</dbReference>
<dbReference type="InterPro" id="IPR040079">
    <property type="entry name" value="Glutathione_S-Trfase"/>
</dbReference>
<dbReference type="InterPro" id="IPR004045">
    <property type="entry name" value="Glutathione_S-Trfase_N"/>
</dbReference>
<dbReference type="InterPro" id="IPR004046">
    <property type="entry name" value="GST_C"/>
</dbReference>
<dbReference type="InterPro" id="IPR050213">
    <property type="entry name" value="GST_superfamily"/>
</dbReference>
<dbReference type="InterPro" id="IPR036249">
    <property type="entry name" value="Thioredoxin-like_sf"/>
</dbReference>
<dbReference type="PANTHER" id="PTHR11571">
    <property type="entry name" value="GLUTATHIONE S-TRANSFERASE"/>
    <property type="match status" value="1"/>
</dbReference>
<dbReference type="PANTHER" id="PTHR11571:SF266">
    <property type="entry name" value="GLUTATHIONE S-TRANSFERASE ALPHA-2-RELATED"/>
    <property type="match status" value="1"/>
</dbReference>
<dbReference type="Pfam" id="PF14497">
    <property type="entry name" value="GST_C_3"/>
    <property type="match status" value="1"/>
</dbReference>
<dbReference type="Pfam" id="PF02798">
    <property type="entry name" value="GST_N"/>
    <property type="match status" value="1"/>
</dbReference>
<dbReference type="SFLD" id="SFLDG00363">
    <property type="entry name" value="AMPS_(cytGST):_Alpha-__Mu-__Pi"/>
    <property type="match status" value="1"/>
</dbReference>
<dbReference type="SFLD" id="SFLDS00019">
    <property type="entry name" value="Glutathione_Transferase_(cytos"/>
    <property type="match status" value="1"/>
</dbReference>
<dbReference type="SUPFAM" id="SSF47616">
    <property type="entry name" value="GST C-terminal domain-like"/>
    <property type="match status" value="1"/>
</dbReference>
<dbReference type="SUPFAM" id="SSF52833">
    <property type="entry name" value="Thioredoxin-like"/>
    <property type="match status" value="1"/>
</dbReference>
<dbReference type="PROSITE" id="PS50405">
    <property type="entry name" value="GST_CTER"/>
    <property type="match status" value="1"/>
</dbReference>
<dbReference type="PROSITE" id="PS50404">
    <property type="entry name" value="GST_NTER"/>
    <property type="match status" value="1"/>
</dbReference>
<keyword id="KW-0007">Acetylation</keyword>
<keyword id="KW-0903">Direct protein sequencing</keyword>
<keyword id="KW-1185">Reference proteome</keyword>
<keyword id="KW-0808">Transferase</keyword>
<evidence type="ECO:0000250" key="1"/>
<evidence type="ECO:0000250" key="2">
    <source>
        <dbReference type="UniProtKB" id="P08263"/>
    </source>
</evidence>
<evidence type="ECO:0000250" key="3">
    <source>
        <dbReference type="UniProtKB" id="P13745"/>
    </source>
</evidence>
<evidence type="ECO:0000250" key="4">
    <source>
        <dbReference type="UniProtKB" id="P30711"/>
    </source>
</evidence>
<evidence type="ECO:0000269" key="5">
    <source ref="3"/>
</evidence>
<evidence type="ECO:0000305" key="6"/>
<protein>
    <recommendedName>
        <fullName>Putative glutathione S-transferase alpha-2</fullName>
        <ecNumber>2.5.1.18</ecNumber>
    </recommendedName>
    <alternativeName>
        <fullName>GST class-alpha 2</fullName>
    </alternativeName>
</protein>
<name>GSTA2_DICDI</name>
<feature type="initiator methionine" description="Removed" evidence="5">
    <location>
        <position position="1"/>
    </location>
</feature>
<feature type="chain" id="PRO_0000350739" description="Putative glutathione S-transferase alpha-2">
    <location>
        <begin position="2"/>
        <end position="198"/>
    </location>
</feature>
<feature type="domain" description="GST N-terminal">
    <location>
        <begin position="5"/>
        <end position="81"/>
    </location>
</feature>
<feature type="domain" description="GST C-terminal">
    <location>
        <begin position="83"/>
        <end position="198"/>
    </location>
</feature>
<feature type="binding site" evidence="3">
    <location>
        <position position="11"/>
    </location>
    <ligand>
        <name>glutathione</name>
        <dbReference type="ChEBI" id="CHEBI:57925"/>
    </ligand>
</feature>
<feature type="binding site" evidence="2">
    <location>
        <position position="45"/>
    </location>
    <ligand>
        <name>glutathione</name>
        <dbReference type="ChEBI" id="CHEBI:57925"/>
    </ligand>
</feature>
<feature type="binding site" evidence="4">
    <location>
        <begin position="52"/>
        <end position="53"/>
    </location>
    <ligand>
        <name>glutathione</name>
        <dbReference type="ChEBI" id="CHEBI:57925"/>
    </ligand>
</feature>
<feature type="binding site" evidence="3">
    <location>
        <begin position="65"/>
        <end position="66"/>
    </location>
    <ligand>
        <name>glutathione</name>
        <dbReference type="ChEBI" id="CHEBI:57925"/>
    </ligand>
</feature>
<feature type="modified residue" description="N-acetylserine" evidence="5">
    <location>
        <position position="2"/>
    </location>
</feature>
<reference key="1">
    <citation type="journal article" date="2002" name="Nature">
        <title>Sequence and analysis of chromosome 2 of Dictyostelium discoideum.</title>
        <authorList>
            <person name="Gloeckner G."/>
            <person name="Eichinger L."/>
            <person name="Szafranski K."/>
            <person name="Pachebat J.A."/>
            <person name="Bankier A.T."/>
            <person name="Dear P.H."/>
            <person name="Lehmann R."/>
            <person name="Baumgart C."/>
            <person name="Parra G."/>
            <person name="Abril J.F."/>
            <person name="Guigo R."/>
            <person name="Kumpf K."/>
            <person name="Tunggal B."/>
            <person name="Cox E.C."/>
            <person name="Quail M.A."/>
            <person name="Platzer M."/>
            <person name="Rosenthal A."/>
            <person name="Noegel A.A."/>
        </authorList>
    </citation>
    <scope>NUCLEOTIDE SEQUENCE [LARGE SCALE GENOMIC DNA]</scope>
    <source>
        <strain>AX4</strain>
    </source>
</reference>
<reference key="2">
    <citation type="journal article" date="2005" name="Nature">
        <title>The genome of the social amoeba Dictyostelium discoideum.</title>
        <authorList>
            <person name="Eichinger L."/>
            <person name="Pachebat J.A."/>
            <person name="Gloeckner G."/>
            <person name="Rajandream M.A."/>
            <person name="Sucgang R."/>
            <person name="Berriman M."/>
            <person name="Song J."/>
            <person name="Olsen R."/>
            <person name="Szafranski K."/>
            <person name="Xu Q."/>
            <person name="Tunggal B."/>
            <person name="Kummerfeld S."/>
            <person name="Madera M."/>
            <person name="Konfortov B.A."/>
            <person name="Rivero F."/>
            <person name="Bankier A.T."/>
            <person name="Lehmann R."/>
            <person name="Hamlin N."/>
            <person name="Davies R."/>
            <person name="Gaudet P."/>
            <person name="Fey P."/>
            <person name="Pilcher K."/>
            <person name="Chen G."/>
            <person name="Saunders D."/>
            <person name="Sodergren E.J."/>
            <person name="Davis P."/>
            <person name="Kerhornou A."/>
            <person name="Nie X."/>
            <person name="Hall N."/>
            <person name="Anjard C."/>
            <person name="Hemphill L."/>
            <person name="Bason N."/>
            <person name="Farbrother P."/>
            <person name="Desany B."/>
            <person name="Just E."/>
            <person name="Morio T."/>
            <person name="Rost R."/>
            <person name="Churcher C.M."/>
            <person name="Cooper J."/>
            <person name="Haydock S."/>
            <person name="van Driessche N."/>
            <person name="Cronin A."/>
            <person name="Goodhead I."/>
            <person name="Muzny D.M."/>
            <person name="Mourier T."/>
            <person name="Pain A."/>
            <person name="Lu M."/>
            <person name="Harper D."/>
            <person name="Lindsay R."/>
            <person name="Hauser H."/>
            <person name="James K.D."/>
            <person name="Quiles M."/>
            <person name="Madan Babu M."/>
            <person name="Saito T."/>
            <person name="Buchrieser C."/>
            <person name="Wardroper A."/>
            <person name="Felder M."/>
            <person name="Thangavelu M."/>
            <person name="Johnson D."/>
            <person name="Knights A."/>
            <person name="Loulseged H."/>
            <person name="Mungall K.L."/>
            <person name="Oliver K."/>
            <person name="Price C."/>
            <person name="Quail M.A."/>
            <person name="Urushihara H."/>
            <person name="Hernandez J."/>
            <person name="Rabbinowitsch E."/>
            <person name="Steffen D."/>
            <person name="Sanders M."/>
            <person name="Ma J."/>
            <person name="Kohara Y."/>
            <person name="Sharp S."/>
            <person name="Simmonds M.N."/>
            <person name="Spiegler S."/>
            <person name="Tivey A."/>
            <person name="Sugano S."/>
            <person name="White B."/>
            <person name="Walker D."/>
            <person name="Woodward J.R."/>
            <person name="Winckler T."/>
            <person name="Tanaka Y."/>
            <person name="Shaulsky G."/>
            <person name="Schleicher M."/>
            <person name="Weinstock G.M."/>
            <person name="Rosenthal A."/>
            <person name="Cox E.C."/>
            <person name="Chisholm R.L."/>
            <person name="Gibbs R.A."/>
            <person name="Loomis W.F."/>
            <person name="Platzer M."/>
            <person name="Kay R.R."/>
            <person name="Williams J.G."/>
            <person name="Dear P.H."/>
            <person name="Noegel A.A."/>
            <person name="Barrell B.G."/>
            <person name="Kuspa A."/>
        </authorList>
    </citation>
    <scope>NUCLEOTIDE SEQUENCE [LARGE SCALE GENOMIC DNA]</scope>
    <source>
        <strain>AX4</strain>
    </source>
</reference>
<reference key="3">
    <citation type="submission" date="2008-04" db="UniProtKB">
        <authorList>
            <person name="Bienvenut W.V."/>
            <person name="Patel H."/>
            <person name="Brunton V.G."/>
            <person name="Frame M.C."/>
        </authorList>
    </citation>
    <scope>PROTEIN SEQUENCE OF 2-15; 23-71; 116-127; 155-172; 178-188 AND 192-198</scope>
    <scope>CLEAVAGE OF INITIATOR METHIONINE</scope>
    <scope>ACETYLATION AT SER-2</scope>
    <scope>IDENTIFICATION BY MASS SPECTROMETRY</scope>
</reference>
<reference key="4">
    <citation type="journal article" date="2006" name="Mol. Cell. Proteomics">
        <title>Proteomics fingerprinting of phagosome maturation and evidence for the role of a Galpha during uptake.</title>
        <authorList>
            <person name="Gotthardt D."/>
            <person name="Blancheteau V."/>
            <person name="Bosserhoff A."/>
            <person name="Ruppert T."/>
            <person name="Delorenzi M."/>
            <person name="Soldati T."/>
        </authorList>
    </citation>
    <scope>IDENTIFICATION BY MASS SPECTROMETRY [LARGE SCALE ANALYSIS]</scope>
    <source>
        <strain>AX2</strain>
    </source>
</reference>
<accession>Q556G3</accession>
<accession>Q86AN9</accession>
<sequence>MSTSSVPSLTYFQGRGLGQFSRVLLSYLGIPYENITVTEISDALRATLPYGQLPIYRDGDFVLTQSSTIARYIAKKHNFMGKNLEEEFLVDQIVTAIHADIFPAFNNPVPEKLQKLYEKYFGSFEKKLQETGFLVGSSVTLADLYVYVGFDYIRFRGEAALSSELSDEKYPKIAELKKFFESNEGVAKYIKERPETKF</sequence>
<proteinExistence type="evidence at protein level"/>
<comment type="function">
    <text evidence="1">Conjugation of reduced glutathione to a wide number of exogenous and endogenous hydrophobic electrophiles.</text>
</comment>
<comment type="catalytic activity">
    <reaction>
        <text>RX + glutathione = an S-substituted glutathione + a halide anion + H(+)</text>
        <dbReference type="Rhea" id="RHEA:16437"/>
        <dbReference type="ChEBI" id="CHEBI:15378"/>
        <dbReference type="ChEBI" id="CHEBI:16042"/>
        <dbReference type="ChEBI" id="CHEBI:17792"/>
        <dbReference type="ChEBI" id="CHEBI:57925"/>
        <dbReference type="ChEBI" id="CHEBI:90779"/>
        <dbReference type="EC" id="2.5.1.18"/>
    </reaction>
</comment>
<comment type="similarity">
    <text evidence="6">Belongs to the GST superfamily. Alpha family.</text>
</comment>
<comment type="caution">
    <text evidence="6">The gene for this protein is duplicated in strains AX3 and AX4. These strains contain a duplication of a segment of 750 kb of chromosome 2 compared to the corresponding sequence in strain AX2.</text>
</comment>
<gene>
    <name type="primary">gsta2-1</name>
    <name type="ORF">DDB_G0272632</name>
</gene>
<gene>
    <name type="primary">gsta2-2</name>
    <name type="ORF">DDB_G0274081</name>
</gene>
<organism>
    <name type="scientific">Dictyostelium discoideum</name>
    <name type="common">Social amoeba</name>
    <dbReference type="NCBI Taxonomy" id="44689"/>
    <lineage>
        <taxon>Eukaryota</taxon>
        <taxon>Amoebozoa</taxon>
        <taxon>Evosea</taxon>
        <taxon>Eumycetozoa</taxon>
        <taxon>Dictyostelia</taxon>
        <taxon>Dictyosteliales</taxon>
        <taxon>Dictyosteliaceae</taxon>
        <taxon>Dictyostelium</taxon>
    </lineage>
</organism>